<reference key="1">
    <citation type="journal article" date="2010" name="Stand. Genomic Sci.">
        <title>Complete genome sequence of Rhizobium leguminosarum bv trifolii strain WSM2304, an effective microsymbiont of the South American clover Trifolium polymorphum.</title>
        <authorList>
            <person name="Reeve W."/>
            <person name="O'Hara G."/>
            <person name="Chain P."/>
            <person name="Ardley J."/>
            <person name="Brau L."/>
            <person name="Nandesena K."/>
            <person name="Tiwari R."/>
            <person name="Malfatti S."/>
            <person name="Kiss H."/>
            <person name="Lapidus A."/>
            <person name="Copeland A."/>
            <person name="Nolan M."/>
            <person name="Land M."/>
            <person name="Ivanova N."/>
            <person name="Mavromatis K."/>
            <person name="Markowitz V."/>
            <person name="Kyrpides N."/>
            <person name="Melino V."/>
            <person name="Denton M."/>
            <person name="Yates R."/>
            <person name="Howieson J."/>
        </authorList>
    </citation>
    <scope>NUCLEOTIDE SEQUENCE [LARGE SCALE GENOMIC DNA]</scope>
    <source>
        <strain>WSM2304</strain>
    </source>
</reference>
<gene>
    <name evidence="1" type="primary">acpP</name>
    <name type="ordered locus">Rleg2_1058</name>
</gene>
<organism>
    <name type="scientific">Rhizobium leguminosarum bv. trifolii (strain WSM2304)</name>
    <dbReference type="NCBI Taxonomy" id="395492"/>
    <lineage>
        <taxon>Bacteria</taxon>
        <taxon>Pseudomonadati</taxon>
        <taxon>Pseudomonadota</taxon>
        <taxon>Alphaproteobacteria</taxon>
        <taxon>Hyphomicrobiales</taxon>
        <taxon>Rhizobiaceae</taxon>
        <taxon>Rhizobium/Agrobacterium group</taxon>
        <taxon>Rhizobium</taxon>
    </lineage>
</organism>
<name>ACP_RHILW</name>
<proteinExistence type="inferred from homology"/>
<dbReference type="EMBL" id="CP001191">
    <property type="protein sequence ID" value="ACI54352.1"/>
    <property type="molecule type" value="Genomic_DNA"/>
</dbReference>
<dbReference type="RefSeq" id="WP_003547058.1">
    <property type="nucleotide sequence ID" value="NC_011369.1"/>
</dbReference>
<dbReference type="SMR" id="B5ZWD3"/>
<dbReference type="STRING" id="395492.Rleg2_1058"/>
<dbReference type="KEGG" id="rlt:Rleg2_1058"/>
<dbReference type="eggNOG" id="COG0236">
    <property type="taxonomic scope" value="Bacteria"/>
</dbReference>
<dbReference type="HOGENOM" id="CLU_108696_5_1_5"/>
<dbReference type="UniPathway" id="UPA00094"/>
<dbReference type="Proteomes" id="UP000008330">
    <property type="component" value="Chromosome"/>
</dbReference>
<dbReference type="GO" id="GO:0005829">
    <property type="term" value="C:cytosol"/>
    <property type="evidence" value="ECO:0007669"/>
    <property type="project" value="TreeGrafter"/>
</dbReference>
<dbReference type="GO" id="GO:0016020">
    <property type="term" value="C:membrane"/>
    <property type="evidence" value="ECO:0007669"/>
    <property type="project" value="GOC"/>
</dbReference>
<dbReference type="GO" id="GO:0000035">
    <property type="term" value="F:acyl binding"/>
    <property type="evidence" value="ECO:0007669"/>
    <property type="project" value="TreeGrafter"/>
</dbReference>
<dbReference type="GO" id="GO:0000036">
    <property type="term" value="F:acyl carrier activity"/>
    <property type="evidence" value="ECO:0007669"/>
    <property type="project" value="UniProtKB-UniRule"/>
</dbReference>
<dbReference type="GO" id="GO:0031177">
    <property type="term" value="F:phosphopantetheine binding"/>
    <property type="evidence" value="ECO:0007669"/>
    <property type="project" value="InterPro"/>
</dbReference>
<dbReference type="GO" id="GO:0009245">
    <property type="term" value="P:lipid A biosynthetic process"/>
    <property type="evidence" value="ECO:0007669"/>
    <property type="project" value="TreeGrafter"/>
</dbReference>
<dbReference type="FunFam" id="1.10.1200.10:FF:000001">
    <property type="entry name" value="Acyl carrier protein"/>
    <property type="match status" value="1"/>
</dbReference>
<dbReference type="Gene3D" id="1.10.1200.10">
    <property type="entry name" value="ACP-like"/>
    <property type="match status" value="1"/>
</dbReference>
<dbReference type="HAMAP" id="MF_01217">
    <property type="entry name" value="Acyl_carrier"/>
    <property type="match status" value="1"/>
</dbReference>
<dbReference type="InterPro" id="IPR003231">
    <property type="entry name" value="ACP"/>
</dbReference>
<dbReference type="InterPro" id="IPR036736">
    <property type="entry name" value="ACP-like_sf"/>
</dbReference>
<dbReference type="InterPro" id="IPR020806">
    <property type="entry name" value="PKS_PP-bd"/>
</dbReference>
<dbReference type="InterPro" id="IPR009081">
    <property type="entry name" value="PP-bd_ACP"/>
</dbReference>
<dbReference type="InterPro" id="IPR006162">
    <property type="entry name" value="Ppantetheine_attach_site"/>
</dbReference>
<dbReference type="NCBIfam" id="TIGR00517">
    <property type="entry name" value="acyl_carrier"/>
    <property type="match status" value="1"/>
</dbReference>
<dbReference type="NCBIfam" id="NF002148">
    <property type="entry name" value="PRK00982.1-2"/>
    <property type="match status" value="1"/>
</dbReference>
<dbReference type="NCBIfam" id="NF002149">
    <property type="entry name" value="PRK00982.1-3"/>
    <property type="match status" value="1"/>
</dbReference>
<dbReference type="NCBIfam" id="NF002150">
    <property type="entry name" value="PRK00982.1-4"/>
    <property type="match status" value="1"/>
</dbReference>
<dbReference type="NCBIfam" id="NF002151">
    <property type="entry name" value="PRK00982.1-5"/>
    <property type="match status" value="1"/>
</dbReference>
<dbReference type="PANTHER" id="PTHR20863">
    <property type="entry name" value="ACYL CARRIER PROTEIN"/>
    <property type="match status" value="1"/>
</dbReference>
<dbReference type="PANTHER" id="PTHR20863:SF76">
    <property type="entry name" value="CARRIER DOMAIN-CONTAINING PROTEIN"/>
    <property type="match status" value="1"/>
</dbReference>
<dbReference type="Pfam" id="PF00550">
    <property type="entry name" value="PP-binding"/>
    <property type="match status" value="1"/>
</dbReference>
<dbReference type="SMART" id="SM00823">
    <property type="entry name" value="PKS_PP"/>
    <property type="match status" value="1"/>
</dbReference>
<dbReference type="SUPFAM" id="SSF47336">
    <property type="entry name" value="ACP-like"/>
    <property type="match status" value="1"/>
</dbReference>
<dbReference type="PROSITE" id="PS50075">
    <property type="entry name" value="CARRIER"/>
    <property type="match status" value="1"/>
</dbReference>
<dbReference type="PROSITE" id="PS00012">
    <property type="entry name" value="PHOSPHOPANTETHEINE"/>
    <property type="match status" value="1"/>
</dbReference>
<protein>
    <recommendedName>
        <fullName evidence="1">Acyl carrier protein</fullName>
        <shortName evidence="1">ACP</shortName>
    </recommendedName>
</protein>
<comment type="function">
    <text evidence="1">Carrier of the growing fatty acid chain in fatty acid biosynthesis.</text>
</comment>
<comment type="pathway">
    <text evidence="1">Lipid metabolism; fatty acid biosynthesis.</text>
</comment>
<comment type="subcellular location">
    <subcellularLocation>
        <location evidence="1">Cytoplasm</location>
    </subcellularLocation>
</comment>
<comment type="PTM">
    <text evidence="1">4'-phosphopantetheine is transferred from CoA to a specific serine of apo-ACP by AcpS. This modification is essential for activity because fatty acids are bound in thioester linkage to the sulfhydryl of the prosthetic group.</text>
</comment>
<comment type="similarity">
    <text evidence="1">Belongs to the acyl carrier protein (ACP) family.</text>
</comment>
<feature type="chain" id="PRO_1000139057" description="Acyl carrier protein">
    <location>
        <begin position="1"/>
        <end position="78"/>
    </location>
</feature>
<feature type="domain" description="Carrier" evidence="2">
    <location>
        <begin position="2"/>
        <end position="77"/>
    </location>
</feature>
<feature type="modified residue" description="O-(pantetheine 4'-phosphoryl)serine" evidence="2">
    <location>
        <position position="37"/>
    </location>
</feature>
<keyword id="KW-0963">Cytoplasm</keyword>
<keyword id="KW-0275">Fatty acid biosynthesis</keyword>
<keyword id="KW-0276">Fatty acid metabolism</keyword>
<keyword id="KW-0444">Lipid biosynthesis</keyword>
<keyword id="KW-0443">Lipid metabolism</keyword>
<keyword id="KW-0596">Phosphopantetheine</keyword>
<keyword id="KW-0597">Phosphoprotein</keyword>
<keyword id="KW-1185">Reference proteome</keyword>
<evidence type="ECO:0000255" key="1">
    <source>
        <dbReference type="HAMAP-Rule" id="MF_01217"/>
    </source>
</evidence>
<evidence type="ECO:0000255" key="2">
    <source>
        <dbReference type="PROSITE-ProRule" id="PRU00258"/>
    </source>
</evidence>
<accession>B5ZWD3</accession>
<sequence>MSDIAERVKKIVIDHLGVDADKVVESASFIDDLGADSLDTVELVMAFEEEFGVEIPDDAADSILTVGDAVKFIEKAQA</sequence>